<evidence type="ECO:0000255" key="1">
    <source>
        <dbReference type="HAMAP-Rule" id="MF_01364"/>
    </source>
</evidence>
<evidence type="ECO:0000305" key="2"/>
<name>RS14Z_GEOMG</name>
<gene>
    <name evidence="1" type="primary">rpsZ</name>
    <name evidence="1" type="synonym">rpsN</name>
    <name type="ordered locus">Gmet_0639</name>
</gene>
<accession>Q39XZ3</accession>
<keyword id="KW-0479">Metal-binding</keyword>
<keyword id="KW-1185">Reference proteome</keyword>
<keyword id="KW-0687">Ribonucleoprotein</keyword>
<keyword id="KW-0689">Ribosomal protein</keyword>
<keyword id="KW-0694">RNA-binding</keyword>
<keyword id="KW-0699">rRNA-binding</keyword>
<keyword id="KW-0862">Zinc</keyword>
<sequence length="61" mass="7101">MAKTSMIIKAQRGSKFKVREYNRCPLCGRPRAYYRKFDMCRICLRKLASTGQIPGVIKSSW</sequence>
<protein>
    <recommendedName>
        <fullName evidence="1">Small ribosomal subunit protein uS14</fullName>
    </recommendedName>
    <alternativeName>
        <fullName evidence="2">30S ribosomal protein S14 type Z</fullName>
    </alternativeName>
</protein>
<organism>
    <name type="scientific">Geobacter metallireducens (strain ATCC 53774 / DSM 7210 / GS-15)</name>
    <dbReference type="NCBI Taxonomy" id="269799"/>
    <lineage>
        <taxon>Bacteria</taxon>
        <taxon>Pseudomonadati</taxon>
        <taxon>Thermodesulfobacteriota</taxon>
        <taxon>Desulfuromonadia</taxon>
        <taxon>Geobacterales</taxon>
        <taxon>Geobacteraceae</taxon>
        <taxon>Geobacter</taxon>
    </lineage>
</organism>
<proteinExistence type="inferred from homology"/>
<reference key="1">
    <citation type="journal article" date="2009" name="BMC Microbiol.">
        <title>The genome sequence of Geobacter metallireducens: features of metabolism, physiology and regulation common and dissimilar to Geobacter sulfurreducens.</title>
        <authorList>
            <person name="Aklujkar M."/>
            <person name="Krushkal J."/>
            <person name="DiBartolo G."/>
            <person name="Lapidus A."/>
            <person name="Land M.L."/>
            <person name="Lovley D.R."/>
        </authorList>
    </citation>
    <scope>NUCLEOTIDE SEQUENCE [LARGE SCALE GENOMIC DNA]</scope>
    <source>
        <strain>ATCC 53774 / DSM 7210 / GS-15</strain>
    </source>
</reference>
<comment type="function">
    <text evidence="1">Binds 16S rRNA, required for the assembly of 30S particles and may also be responsible for determining the conformation of the 16S rRNA at the A site.</text>
</comment>
<comment type="cofactor">
    <cofactor evidence="1">
        <name>Zn(2+)</name>
        <dbReference type="ChEBI" id="CHEBI:29105"/>
    </cofactor>
    <text evidence="1">Binds 1 zinc ion per subunit.</text>
</comment>
<comment type="subunit">
    <text evidence="1">Part of the 30S ribosomal subunit. Contacts proteins S3 and S10.</text>
</comment>
<comment type="similarity">
    <text evidence="1">Belongs to the universal ribosomal protein uS14 family. Zinc-binding uS14 subfamily.</text>
</comment>
<feature type="chain" id="PRO_0000269103" description="Small ribosomal subunit protein uS14">
    <location>
        <begin position="1"/>
        <end position="61"/>
    </location>
</feature>
<feature type="binding site" evidence="1">
    <location>
        <position position="24"/>
    </location>
    <ligand>
        <name>Zn(2+)</name>
        <dbReference type="ChEBI" id="CHEBI:29105"/>
    </ligand>
</feature>
<feature type="binding site" evidence="1">
    <location>
        <position position="27"/>
    </location>
    <ligand>
        <name>Zn(2+)</name>
        <dbReference type="ChEBI" id="CHEBI:29105"/>
    </ligand>
</feature>
<feature type="binding site" evidence="1">
    <location>
        <position position="40"/>
    </location>
    <ligand>
        <name>Zn(2+)</name>
        <dbReference type="ChEBI" id="CHEBI:29105"/>
    </ligand>
</feature>
<feature type="binding site" evidence="1">
    <location>
        <position position="43"/>
    </location>
    <ligand>
        <name>Zn(2+)</name>
        <dbReference type="ChEBI" id="CHEBI:29105"/>
    </ligand>
</feature>
<dbReference type="EMBL" id="CP000148">
    <property type="protein sequence ID" value="ABB30881.1"/>
    <property type="molecule type" value="Genomic_DNA"/>
</dbReference>
<dbReference type="SMR" id="Q39XZ3"/>
<dbReference type="STRING" id="269799.Gmet_0639"/>
<dbReference type="KEGG" id="gme:Gmet_0639"/>
<dbReference type="eggNOG" id="COG0199">
    <property type="taxonomic scope" value="Bacteria"/>
</dbReference>
<dbReference type="HOGENOM" id="CLU_139869_3_0_7"/>
<dbReference type="Proteomes" id="UP000007073">
    <property type="component" value="Chromosome"/>
</dbReference>
<dbReference type="GO" id="GO:0005737">
    <property type="term" value="C:cytoplasm"/>
    <property type="evidence" value="ECO:0007669"/>
    <property type="project" value="UniProtKB-ARBA"/>
</dbReference>
<dbReference type="GO" id="GO:0015935">
    <property type="term" value="C:small ribosomal subunit"/>
    <property type="evidence" value="ECO:0007669"/>
    <property type="project" value="TreeGrafter"/>
</dbReference>
<dbReference type="GO" id="GO:0019843">
    <property type="term" value="F:rRNA binding"/>
    <property type="evidence" value="ECO:0007669"/>
    <property type="project" value="UniProtKB-UniRule"/>
</dbReference>
<dbReference type="GO" id="GO:0003735">
    <property type="term" value="F:structural constituent of ribosome"/>
    <property type="evidence" value="ECO:0007669"/>
    <property type="project" value="InterPro"/>
</dbReference>
<dbReference type="GO" id="GO:0008270">
    <property type="term" value="F:zinc ion binding"/>
    <property type="evidence" value="ECO:0007669"/>
    <property type="project" value="UniProtKB-UniRule"/>
</dbReference>
<dbReference type="GO" id="GO:0006412">
    <property type="term" value="P:translation"/>
    <property type="evidence" value="ECO:0007669"/>
    <property type="project" value="UniProtKB-UniRule"/>
</dbReference>
<dbReference type="FunFam" id="4.10.830.10:FF:000001">
    <property type="entry name" value="30S ribosomal protein S14 type Z"/>
    <property type="match status" value="1"/>
</dbReference>
<dbReference type="Gene3D" id="4.10.830.10">
    <property type="entry name" value="30s Ribosomal Protein S14, Chain N"/>
    <property type="match status" value="1"/>
</dbReference>
<dbReference type="HAMAP" id="MF_01364_B">
    <property type="entry name" value="Ribosomal_uS14_2_B"/>
    <property type="match status" value="1"/>
</dbReference>
<dbReference type="InterPro" id="IPR001209">
    <property type="entry name" value="Ribosomal_uS14"/>
</dbReference>
<dbReference type="InterPro" id="IPR023053">
    <property type="entry name" value="Ribosomal_uS14_bact"/>
</dbReference>
<dbReference type="InterPro" id="IPR018271">
    <property type="entry name" value="Ribosomal_uS14_CS"/>
</dbReference>
<dbReference type="InterPro" id="IPR043140">
    <property type="entry name" value="Ribosomal_uS14_sf"/>
</dbReference>
<dbReference type="NCBIfam" id="NF005974">
    <property type="entry name" value="PRK08061.1"/>
    <property type="match status" value="1"/>
</dbReference>
<dbReference type="PANTHER" id="PTHR19836">
    <property type="entry name" value="30S RIBOSOMAL PROTEIN S14"/>
    <property type="match status" value="1"/>
</dbReference>
<dbReference type="PANTHER" id="PTHR19836:SF19">
    <property type="entry name" value="SMALL RIBOSOMAL SUBUNIT PROTEIN US14M"/>
    <property type="match status" value="1"/>
</dbReference>
<dbReference type="Pfam" id="PF00253">
    <property type="entry name" value="Ribosomal_S14"/>
    <property type="match status" value="1"/>
</dbReference>
<dbReference type="SUPFAM" id="SSF57716">
    <property type="entry name" value="Glucocorticoid receptor-like (DNA-binding domain)"/>
    <property type="match status" value="1"/>
</dbReference>
<dbReference type="PROSITE" id="PS00527">
    <property type="entry name" value="RIBOSOMAL_S14"/>
    <property type="match status" value="1"/>
</dbReference>